<feature type="chain" id="PRO_0000268675" description="Isochorismatase domain-containing protein 2">
    <location>
        <begin position="1"/>
        <end position="210"/>
    </location>
</feature>
<feature type="modified residue" description="Phosphoserine" evidence="2">
    <location>
        <position position="7"/>
    </location>
</feature>
<keyword id="KW-0963">Cytoplasm</keyword>
<keyword id="KW-0539">Nucleus</keyword>
<keyword id="KW-0597">Phosphoprotein</keyword>
<keyword id="KW-1185">Reference proteome</keyword>
<comment type="subunit">
    <text evidence="1">Interacts with CDKN2A.</text>
</comment>
<comment type="subcellular location">
    <subcellularLocation>
        <location evidence="1">Cytoplasm</location>
    </subcellularLocation>
    <subcellularLocation>
        <location evidence="1">Nucleus</location>
    </subcellularLocation>
    <text evidence="1">Localizes to the nucleus in the presence of CDKN2A.</text>
</comment>
<comment type="similarity">
    <text evidence="3">Belongs to the isochorismatase family.</text>
</comment>
<proteinExistence type="evidence at transcript level"/>
<protein>
    <recommendedName>
        <fullName>Isochorismatase domain-containing protein 2</fullName>
    </recommendedName>
</protein>
<name>ISOC2_RAT</name>
<evidence type="ECO:0000250" key="1"/>
<evidence type="ECO:0000250" key="2">
    <source>
        <dbReference type="UniProtKB" id="Q96AB3"/>
    </source>
</evidence>
<evidence type="ECO:0000305" key="3"/>
<organism>
    <name type="scientific">Rattus norvegicus</name>
    <name type="common">Rat</name>
    <dbReference type="NCBI Taxonomy" id="10116"/>
    <lineage>
        <taxon>Eukaryota</taxon>
        <taxon>Metazoa</taxon>
        <taxon>Chordata</taxon>
        <taxon>Craniata</taxon>
        <taxon>Vertebrata</taxon>
        <taxon>Euteleostomi</taxon>
        <taxon>Mammalia</taxon>
        <taxon>Eutheria</taxon>
        <taxon>Euarchontoglires</taxon>
        <taxon>Glires</taxon>
        <taxon>Rodentia</taxon>
        <taxon>Myomorpha</taxon>
        <taxon>Muroidea</taxon>
        <taxon>Muridae</taxon>
        <taxon>Murinae</taxon>
        <taxon>Rattus</taxon>
    </lineage>
</organism>
<sequence length="210" mass="23157">MAAARASLGRIFPESSILFLCDMQEKLRDRVLYFPQIVSMAARMLKVARILDVPVLLTEHYPQGLGPTVPELGAQGVRTMSKTSFSMVPPLQQELDKLPQLKSVLLCGIETQVCILNTALDLLDRGLQVHVAVDACSSQSEMNRLVALARMQHSGVFLSTSEALTLQLIKDAAHPQFKEIQKILKEPVPEIGLLGFFQGMNNPLLPNSRP</sequence>
<reference key="1">
    <citation type="journal article" date="2004" name="Genome Res.">
        <title>The status, quality, and expansion of the NIH full-length cDNA project: the Mammalian Gene Collection (MGC).</title>
        <authorList>
            <consortium name="The MGC Project Team"/>
        </authorList>
    </citation>
    <scope>NUCLEOTIDE SEQUENCE [LARGE SCALE MRNA]</scope>
    <source>
        <tissue>Ovary</tissue>
    </source>
</reference>
<accession>Q5U3Z3</accession>
<gene>
    <name type="primary">Isoc2</name>
    <name type="synonym">Isoc2b</name>
</gene>
<dbReference type="EMBL" id="BC085336">
    <property type="protein sequence ID" value="AAH85336.1"/>
    <property type="molecule type" value="mRNA"/>
</dbReference>
<dbReference type="RefSeq" id="NP_001008368.1">
    <property type="nucleotide sequence ID" value="NM_001008367.1"/>
</dbReference>
<dbReference type="SMR" id="Q5U3Z3"/>
<dbReference type="FunCoup" id="Q5U3Z3">
    <property type="interactions" value="171"/>
</dbReference>
<dbReference type="STRING" id="10116.ENSRNOP00000022621"/>
<dbReference type="GlyGen" id="Q5U3Z3">
    <property type="glycosylation" value="1 site"/>
</dbReference>
<dbReference type="iPTMnet" id="Q5U3Z3"/>
<dbReference type="PhosphoSitePlus" id="Q5U3Z3"/>
<dbReference type="PaxDb" id="10116-ENSRNOP00000022621"/>
<dbReference type="GeneID" id="361501"/>
<dbReference type="KEGG" id="rno:361501"/>
<dbReference type="UCSC" id="RGD:1309062">
    <property type="organism name" value="rat"/>
</dbReference>
<dbReference type="AGR" id="RGD:1309062"/>
<dbReference type="CTD" id="67441"/>
<dbReference type="RGD" id="1309062">
    <property type="gene designation" value="Isoc2b"/>
</dbReference>
<dbReference type="VEuPathDB" id="HostDB:ENSRNOG00000016829"/>
<dbReference type="eggNOG" id="KOG4044">
    <property type="taxonomic scope" value="Eukaryota"/>
</dbReference>
<dbReference type="HOGENOM" id="CLU_066901_0_1_1"/>
<dbReference type="InParanoid" id="Q5U3Z3"/>
<dbReference type="OrthoDB" id="269496at2759"/>
<dbReference type="PhylomeDB" id="Q5U3Z3"/>
<dbReference type="TreeFam" id="TF313459"/>
<dbReference type="PRO" id="PR:Q5U3Z3"/>
<dbReference type="Proteomes" id="UP000002494">
    <property type="component" value="Chromosome 1"/>
</dbReference>
<dbReference type="Bgee" id="ENSRNOG00000016829">
    <property type="expression patterns" value="Expressed in heart and 19 other cell types or tissues"/>
</dbReference>
<dbReference type="GO" id="GO:0005737">
    <property type="term" value="C:cytoplasm"/>
    <property type="evidence" value="ECO:0000266"/>
    <property type="project" value="RGD"/>
</dbReference>
<dbReference type="GO" id="GO:0005634">
    <property type="term" value="C:nucleus"/>
    <property type="evidence" value="ECO:0000266"/>
    <property type="project" value="RGD"/>
</dbReference>
<dbReference type="GO" id="GO:0031648">
    <property type="term" value="P:protein destabilization"/>
    <property type="evidence" value="ECO:0000266"/>
    <property type="project" value="RGD"/>
</dbReference>
<dbReference type="CDD" id="cd01012">
    <property type="entry name" value="YcaC_related"/>
    <property type="match status" value="1"/>
</dbReference>
<dbReference type="FunFam" id="3.40.50.850:FF:000001">
    <property type="entry name" value="Isochorismatase domain-containing protein 1"/>
    <property type="match status" value="1"/>
</dbReference>
<dbReference type="Gene3D" id="3.40.50.850">
    <property type="entry name" value="Isochorismatase-like"/>
    <property type="match status" value="1"/>
</dbReference>
<dbReference type="InterPro" id="IPR000868">
    <property type="entry name" value="Isochorismatase-like_dom"/>
</dbReference>
<dbReference type="InterPro" id="IPR036380">
    <property type="entry name" value="Isochorismatase-like_sf"/>
</dbReference>
<dbReference type="InterPro" id="IPR050993">
    <property type="entry name" value="Isochorismatase_domain"/>
</dbReference>
<dbReference type="PANTHER" id="PTHR14119">
    <property type="entry name" value="HYDROLASE"/>
    <property type="match status" value="1"/>
</dbReference>
<dbReference type="PANTHER" id="PTHR14119:SF5">
    <property type="entry name" value="ISOCHORISMATASE DOMAIN-CONTAINING PROTEIN 2B"/>
    <property type="match status" value="1"/>
</dbReference>
<dbReference type="Pfam" id="PF00857">
    <property type="entry name" value="Isochorismatase"/>
    <property type="match status" value="1"/>
</dbReference>
<dbReference type="SUPFAM" id="SSF52499">
    <property type="entry name" value="Isochorismatase-like hydrolases"/>
    <property type="match status" value="1"/>
</dbReference>